<gene>
    <name type="primary">Caprin1</name>
    <name type="synonym">Gpiap</name>
    <name type="synonym">Gpiap1</name>
    <name type="synonym">Gpip137</name>
    <name evidence="9" type="synonym">M11s1</name>
    <name type="synonym">Rng105</name>
    <name evidence="10" type="ORF">G5E5</name>
</gene>
<name>CAPR1_MOUSE</name>
<reference key="1">
    <citation type="submission" date="1995-12" db="EMBL/GenBank/DDBJ databases">
        <title>Novel cDNA clone, G5E5, isolated from a mouse neonatal cerebellar library is expressed in a variety of adult and neonatal tissues.</title>
        <authorList>
            <person name="Hodes M.E."/>
        </authorList>
    </citation>
    <scope>NUCLEOTIDE SEQUENCE [MRNA]</scope>
    <source>
        <strain>C57BL/6J-AW-J/AW-J X CBA/CAGNLE-A/A</strain>
        <tissue>Cerebellum</tissue>
    </source>
</reference>
<reference key="2">
    <citation type="submission" date="2007-12" db="EMBL/GenBank/DDBJ databases">
        <title>RNA granule protein RNG105 deficiency impairs the dendritic localization of Na+/K+ ATPase subunit isoforms and synapse formation.</title>
        <authorList>
            <person name="Shiina N."/>
            <person name="Tokunaga M."/>
        </authorList>
    </citation>
    <scope>NUCLEOTIDE SEQUENCE [MRNA]</scope>
    <source>
        <strain>C57BL/6J</strain>
    </source>
</reference>
<reference key="3">
    <citation type="journal article" date="2009" name="PLoS Biol.">
        <title>Lineage-specific biology revealed by a finished genome assembly of the mouse.</title>
        <authorList>
            <person name="Church D.M."/>
            <person name="Goodstadt L."/>
            <person name="Hillier L.W."/>
            <person name="Zody M.C."/>
            <person name="Goldstein S."/>
            <person name="She X."/>
            <person name="Bult C.J."/>
            <person name="Agarwala R."/>
            <person name="Cherry J.L."/>
            <person name="DiCuccio M."/>
            <person name="Hlavina W."/>
            <person name="Kapustin Y."/>
            <person name="Meric P."/>
            <person name="Maglott D."/>
            <person name="Birtle Z."/>
            <person name="Marques A.C."/>
            <person name="Graves T."/>
            <person name="Zhou S."/>
            <person name="Teague B."/>
            <person name="Potamousis K."/>
            <person name="Churas C."/>
            <person name="Place M."/>
            <person name="Herschleb J."/>
            <person name="Runnheim R."/>
            <person name="Forrest D."/>
            <person name="Amos-Landgraf J."/>
            <person name="Schwartz D.C."/>
            <person name="Cheng Z."/>
            <person name="Lindblad-Toh K."/>
            <person name="Eichler E.E."/>
            <person name="Ponting C.P."/>
        </authorList>
    </citation>
    <scope>NUCLEOTIDE SEQUENCE [LARGE SCALE GENOMIC DNA]</scope>
    <source>
        <strain>C57BL/6J</strain>
    </source>
</reference>
<reference key="4">
    <citation type="journal article" date="2004" name="Genome Res.">
        <title>The status, quality, and expansion of the NIH full-length cDNA project: the Mammalian Gene Collection (MGC).</title>
        <authorList>
            <consortium name="The MGC Project Team"/>
        </authorList>
    </citation>
    <scope>NUCLEOTIDE SEQUENCE [LARGE SCALE MRNA]</scope>
</reference>
<reference key="5">
    <citation type="journal article" date="1996" name="Genomics">
        <title>The gene encoding the GPI-anchored membrane protein p137GPI (M11S1) maps to human chromosome 11p13 and is highly conserved in the mouse.</title>
        <authorList>
            <person name="Gessler M."/>
            <person name="Klant B."/>
            <person name="Tsaoussidou S."/>
            <person name="Ellis J.A."/>
            <person name="Luzio J.P."/>
        </authorList>
    </citation>
    <scope>NUCLEOTIDE SEQUENCE [GENOMIC DNA] OF 1-362</scope>
    <source>
        <strain>C57BL/6J</strain>
        <tissue>Embryo</tissue>
    </source>
</reference>
<reference key="6">
    <citation type="submission" date="1995-06" db="EMBL/GenBank/DDBJ databases">
        <title>Novel cDNA clone, G5E5, maps to chromosome 16 and is expressed in a variety of adult and neonatal tissues.</title>
        <authorList>
            <person name="Hodes M.E."/>
        </authorList>
    </citation>
    <scope>NUCLEOTIDE SEQUENCE [MRNA] OF 402-707</scope>
    <source>
        <strain>C57BL/6J-AW-J/AW-J X CBA/CAGNLE-A/A</strain>
        <tissue>Cerebellum</tissue>
    </source>
</reference>
<reference key="7">
    <citation type="journal article" date="2004" name="J. Immunol.">
        <title>Activation/division of lymphocytes results in increased levels of cytoplasmic activation/proliferation-associated protein-1: prototype of a new family of proteins.</title>
        <authorList>
            <person name="Grill B."/>
            <person name="Wilson G.M."/>
            <person name="Zhang K.-X."/>
            <person name="Wang B."/>
            <person name="Doyonnas R."/>
            <person name="Quadroni M."/>
            <person name="Schrader J.W."/>
        </authorList>
    </citation>
    <scope>IDENTIFICATION</scope>
    <scope>SUBCELLULAR LOCATION</scope>
    <scope>TISSUE SPECIFICITY</scope>
    <scope>DEVELOPMENTAL STAGE</scope>
    <scope>PHOSPHORYLATION</scope>
    <scope>MULTIMERIZATION</scope>
</reference>
<reference key="8">
    <citation type="journal article" date="2007" name="Mol. Cell. Biol.">
        <title>Distinct structural features of caprin-1 mediate its interaction with G3BP-1 and its induction of phosphorylation of eukaryotic translation initiation factor 2alpha, entry to cytoplasmic stress granules, and selective interaction with a subset of mRNAs.</title>
        <authorList>
            <person name="Solomon S."/>
            <person name="Xu Y."/>
            <person name="Wang B."/>
            <person name="David M.D."/>
            <person name="Schubert P."/>
            <person name="Kennedy D."/>
            <person name="Schrader J.W."/>
        </authorList>
    </citation>
    <scope>INTERACTION WITH G3BP1</scope>
    <scope>SUBCELLULAR LOCATION</scope>
</reference>
<reference key="9">
    <citation type="journal article" date="2010" name="Cell">
        <title>A tissue-specific atlas of mouse protein phosphorylation and expression.</title>
        <authorList>
            <person name="Huttlin E.L."/>
            <person name="Jedrychowski M.P."/>
            <person name="Elias J.E."/>
            <person name="Goswami T."/>
            <person name="Rad R."/>
            <person name="Beausoleil S.A."/>
            <person name="Villen J."/>
            <person name="Haas W."/>
            <person name="Sowa M.E."/>
            <person name="Gygi S.P."/>
        </authorList>
    </citation>
    <scope>IDENTIFICATION BY MASS SPECTROMETRY [LARGE SCALE ANALYSIS]</scope>
    <source>
        <tissue>Brain</tissue>
        <tissue>Brown adipose tissue</tissue>
        <tissue>Heart</tissue>
        <tissue>Kidney</tissue>
        <tissue>Liver</tissue>
        <tissue>Lung</tissue>
        <tissue>Pancreas</tissue>
        <tissue>Spleen</tissue>
        <tissue>Testis</tissue>
    </source>
</reference>
<reference key="10">
    <citation type="journal article" date="2010" name="J. Biol. Chem.">
        <title>RNA granule protein 140 (RNG140), a paralog of RNG105 localized to distinct RNA granules in neuronal dendrites in the adult vertebrate brain.</title>
        <authorList>
            <person name="Shiina N."/>
            <person name="Tokunaga M."/>
        </authorList>
    </citation>
    <scope>FUNCTION</scope>
    <scope>TISSUE SPECIFICITY</scope>
    <scope>DEVELOPMENTAL STAGE</scope>
</reference>
<reference key="11">
    <citation type="journal article" date="2014" name="Mol. Cell. Proteomics">
        <title>Immunoaffinity enrichment and mass spectrometry analysis of protein methylation.</title>
        <authorList>
            <person name="Guo A."/>
            <person name="Gu H."/>
            <person name="Zhou J."/>
            <person name="Mulhern D."/>
            <person name="Wang Y."/>
            <person name="Lee K.A."/>
            <person name="Yang V."/>
            <person name="Aguiar M."/>
            <person name="Kornhauser J."/>
            <person name="Jia X."/>
            <person name="Ren J."/>
            <person name="Beausoleil S.A."/>
            <person name="Silva J.C."/>
            <person name="Vemulapalli V."/>
            <person name="Bedford M.T."/>
            <person name="Comb M.J."/>
        </authorList>
    </citation>
    <scope>METHYLATION [LARGE SCALE ANALYSIS] AT ARG-163; ARG-631; ARG-638 AND ARG-696</scope>
    <scope>IDENTIFICATION BY MASS SPECTROMETRY [LARGE SCALE ANALYSIS]</scope>
    <source>
        <tissue>Brain</tissue>
        <tissue>Embryo</tissue>
    </source>
</reference>
<keyword id="KW-0007">Acetylation</keyword>
<keyword id="KW-0067">ATP-binding</keyword>
<keyword id="KW-0966">Cell projection</keyword>
<keyword id="KW-0175">Coiled coil</keyword>
<keyword id="KW-0963">Cytoplasm</keyword>
<keyword id="KW-0221">Differentiation</keyword>
<keyword id="KW-0325">Glycoprotein</keyword>
<keyword id="KW-0488">Methylation</keyword>
<keyword id="KW-0547">Nucleotide-binding</keyword>
<keyword id="KW-0597">Phosphoprotein</keyword>
<keyword id="KW-0652">Protein synthesis inhibitor</keyword>
<keyword id="KW-1185">Reference proteome</keyword>
<keyword id="KW-0694">RNA-binding</keyword>
<dbReference type="EMBL" id="U27838">
    <property type="protein sequence ID" value="AAA82599.1"/>
    <property type="status" value="ALT_INIT"/>
    <property type="molecule type" value="mRNA"/>
</dbReference>
<dbReference type="EMBL" id="AB373955">
    <property type="protein sequence ID" value="BAF96513.1"/>
    <property type="molecule type" value="mRNA"/>
</dbReference>
<dbReference type="EMBL" id="BX537331">
    <property type="status" value="NOT_ANNOTATED_CDS"/>
    <property type="molecule type" value="Genomic_DNA"/>
</dbReference>
<dbReference type="EMBL" id="BC052427">
    <property type="protein sequence ID" value="AAH52427.2"/>
    <property type="molecule type" value="mRNA"/>
</dbReference>
<dbReference type="EMBL" id="X89571">
    <property type="protein sequence ID" value="CAA61750.1"/>
    <property type="status" value="ALT_SEQ"/>
    <property type="molecule type" value="Genomic_DNA"/>
</dbReference>
<dbReference type="EMBL" id="U18773">
    <property type="protein sequence ID" value="AAA68561.1"/>
    <property type="status" value="ALT_FRAME"/>
    <property type="molecule type" value="mRNA"/>
</dbReference>
<dbReference type="EMBL" id="BK001105">
    <property type="protein sequence ID" value="DAA01122.1"/>
    <property type="molecule type" value="mRNA"/>
</dbReference>
<dbReference type="CCDS" id="CCDS16481.1"/>
<dbReference type="PIR" id="S58008">
    <property type="entry name" value="S58008"/>
</dbReference>
<dbReference type="RefSeq" id="NP_001104759.1">
    <property type="nucleotide sequence ID" value="NM_001111289.2"/>
</dbReference>
<dbReference type="RefSeq" id="NP_001104760.1">
    <property type="nucleotide sequence ID" value="NM_001111290.1"/>
</dbReference>
<dbReference type="RefSeq" id="NP_001104761.1">
    <property type="nucleotide sequence ID" value="NM_001111291.1"/>
</dbReference>
<dbReference type="RefSeq" id="NP_001104762.1">
    <property type="nucleotide sequence ID" value="NM_001111292.1"/>
</dbReference>
<dbReference type="RefSeq" id="NP_058019.2">
    <property type="nucleotide sequence ID" value="NM_016739.3"/>
</dbReference>
<dbReference type="SMR" id="Q60865"/>
<dbReference type="BioGRID" id="207501">
    <property type="interactions" value="28"/>
</dbReference>
<dbReference type="FunCoup" id="Q60865">
    <property type="interactions" value="4377"/>
</dbReference>
<dbReference type="IntAct" id="Q60865">
    <property type="interactions" value="13"/>
</dbReference>
<dbReference type="MINT" id="Q60865"/>
<dbReference type="STRING" id="10090.ENSMUSP00000028607"/>
<dbReference type="GlyGen" id="Q60865">
    <property type="glycosylation" value="3 sites, 1 O-linked glycan (1 site)"/>
</dbReference>
<dbReference type="iPTMnet" id="Q60865"/>
<dbReference type="PhosphoSitePlus" id="Q60865"/>
<dbReference type="SwissPalm" id="Q60865"/>
<dbReference type="jPOST" id="Q60865"/>
<dbReference type="PaxDb" id="10090-ENSMUSP00000028607"/>
<dbReference type="PeptideAtlas" id="Q60865"/>
<dbReference type="ProteomicsDB" id="281772"/>
<dbReference type="Pumba" id="Q60865"/>
<dbReference type="Antibodypedia" id="12960">
    <property type="antibodies" value="337 antibodies from 32 providers"/>
</dbReference>
<dbReference type="DNASU" id="53872"/>
<dbReference type="Ensembl" id="ENSMUST00000028607.13">
    <property type="protein sequence ID" value="ENSMUSP00000028607.7"/>
    <property type="gene ID" value="ENSMUSG00000027184.15"/>
</dbReference>
<dbReference type="Ensembl" id="ENSMUST00000111147.8">
    <property type="protein sequence ID" value="ENSMUSP00000106777.2"/>
    <property type="gene ID" value="ENSMUSG00000027184.15"/>
</dbReference>
<dbReference type="GeneID" id="53872"/>
<dbReference type="KEGG" id="mmu:53872"/>
<dbReference type="UCSC" id="uc008ljb.2">
    <property type="organism name" value="mouse"/>
</dbReference>
<dbReference type="AGR" id="MGI:1858234"/>
<dbReference type="CTD" id="4076"/>
<dbReference type="MGI" id="MGI:1858234">
    <property type="gene designation" value="Caprin1"/>
</dbReference>
<dbReference type="VEuPathDB" id="HostDB:ENSMUSG00000027184"/>
<dbReference type="eggNOG" id="ENOG502QUGC">
    <property type="taxonomic scope" value="Eukaryota"/>
</dbReference>
<dbReference type="GeneTree" id="ENSGT00940000153438"/>
<dbReference type="HOGENOM" id="CLU_024060_0_0_1"/>
<dbReference type="InParanoid" id="Q60865"/>
<dbReference type="OMA" id="GNNHWNS"/>
<dbReference type="OrthoDB" id="10062814at2759"/>
<dbReference type="PhylomeDB" id="Q60865"/>
<dbReference type="TreeFam" id="TF329471"/>
<dbReference type="BioGRID-ORCS" id="53872">
    <property type="hits" value="8 hits in 79 CRISPR screens"/>
</dbReference>
<dbReference type="CD-CODE" id="CE726F99">
    <property type="entry name" value="Postsynaptic density"/>
</dbReference>
<dbReference type="CD-CODE" id="D12E4DB9">
    <property type="entry name" value="Stress granule"/>
</dbReference>
<dbReference type="ChiTaRS" id="Caprin1">
    <property type="organism name" value="mouse"/>
</dbReference>
<dbReference type="PRO" id="PR:Q60865"/>
<dbReference type="Proteomes" id="UP000000589">
    <property type="component" value="Chromosome 2"/>
</dbReference>
<dbReference type="RNAct" id="Q60865">
    <property type="molecule type" value="protein"/>
</dbReference>
<dbReference type="Bgee" id="ENSMUSG00000027184">
    <property type="expression patterns" value="Expressed in undifferentiated genital tubercle and 263 other cell types or tissues"/>
</dbReference>
<dbReference type="ExpressionAtlas" id="Q60865">
    <property type="expression patterns" value="baseline and differential"/>
</dbReference>
<dbReference type="GO" id="GO:0031252">
    <property type="term" value="C:cell leading edge"/>
    <property type="evidence" value="ECO:0000250"/>
    <property type="project" value="UniProtKB"/>
</dbReference>
<dbReference type="GO" id="GO:0010494">
    <property type="term" value="C:cytoplasmic stress granule"/>
    <property type="evidence" value="ECO:0000314"/>
    <property type="project" value="MGI"/>
</dbReference>
<dbReference type="GO" id="GO:0005829">
    <property type="term" value="C:cytosol"/>
    <property type="evidence" value="ECO:0007669"/>
    <property type="project" value="UniProtKB-SubCell"/>
</dbReference>
<dbReference type="GO" id="GO:0030425">
    <property type="term" value="C:dendrite"/>
    <property type="evidence" value="ECO:0000315"/>
    <property type="project" value="MGI"/>
</dbReference>
<dbReference type="GO" id="GO:0030027">
    <property type="term" value="C:lamellipodium"/>
    <property type="evidence" value="ECO:0007669"/>
    <property type="project" value="UniProtKB-SubCell"/>
</dbReference>
<dbReference type="GO" id="GO:0000932">
    <property type="term" value="C:P-body"/>
    <property type="evidence" value="ECO:0000250"/>
    <property type="project" value="UniProtKB"/>
</dbReference>
<dbReference type="GO" id="GO:0045202">
    <property type="term" value="C:synapse"/>
    <property type="evidence" value="ECO:0000314"/>
    <property type="project" value="SynGO"/>
</dbReference>
<dbReference type="GO" id="GO:0005524">
    <property type="term" value="F:ATP binding"/>
    <property type="evidence" value="ECO:0000250"/>
    <property type="project" value="UniProtKB"/>
</dbReference>
<dbReference type="GO" id="GO:0140693">
    <property type="term" value="F:molecular condensate scaffold activity"/>
    <property type="evidence" value="ECO:0000250"/>
    <property type="project" value="UniProtKB"/>
</dbReference>
<dbReference type="GO" id="GO:0140677">
    <property type="term" value="F:molecular function activator activity"/>
    <property type="evidence" value="ECO:0007669"/>
    <property type="project" value="Ensembl"/>
</dbReference>
<dbReference type="GO" id="GO:0003729">
    <property type="term" value="F:mRNA binding"/>
    <property type="evidence" value="ECO:0007669"/>
    <property type="project" value="Ensembl"/>
</dbReference>
<dbReference type="GO" id="GO:0003723">
    <property type="term" value="F:RNA binding"/>
    <property type="evidence" value="ECO:0000250"/>
    <property type="project" value="UniProtKB"/>
</dbReference>
<dbReference type="GO" id="GO:0035591">
    <property type="term" value="F:signaling adaptor activity"/>
    <property type="evidence" value="ECO:0007669"/>
    <property type="project" value="Ensembl"/>
</dbReference>
<dbReference type="GO" id="GO:0048699">
    <property type="term" value="P:generation of neurons"/>
    <property type="evidence" value="ECO:0000315"/>
    <property type="project" value="MGI"/>
</dbReference>
<dbReference type="GO" id="GO:0008298">
    <property type="term" value="P:intracellular mRNA localization"/>
    <property type="evidence" value="ECO:0000315"/>
    <property type="project" value="MGI"/>
</dbReference>
<dbReference type="GO" id="GO:0140694">
    <property type="term" value="P:membraneless organelle assembly"/>
    <property type="evidence" value="ECO:0007669"/>
    <property type="project" value="Ensembl"/>
</dbReference>
<dbReference type="GO" id="GO:0017148">
    <property type="term" value="P:negative regulation of translation"/>
    <property type="evidence" value="ECO:0000250"/>
    <property type="project" value="UniProtKB"/>
</dbReference>
<dbReference type="GO" id="GO:0007399">
    <property type="term" value="P:nervous system development"/>
    <property type="evidence" value="ECO:0000315"/>
    <property type="project" value="MGI"/>
</dbReference>
<dbReference type="GO" id="GO:0050775">
    <property type="term" value="P:positive regulation of dendrite morphogenesis"/>
    <property type="evidence" value="ECO:0000315"/>
    <property type="project" value="UniProtKB"/>
</dbReference>
<dbReference type="GO" id="GO:0061003">
    <property type="term" value="P:positive regulation of dendritic spine morphogenesis"/>
    <property type="evidence" value="ECO:0000315"/>
    <property type="project" value="UniProtKB"/>
</dbReference>
<dbReference type="GO" id="GO:0062029">
    <property type="term" value="P:positive regulation of stress granule assembly"/>
    <property type="evidence" value="ECO:0000250"/>
    <property type="project" value="UniProtKB"/>
</dbReference>
<dbReference type="GO" id="GO:0106288">
    <property type="term" value="P:regulation of deadenylation-dependent decapping of nuclear-transcribed mRNA"/>
    <property type="evidence" value="ECO:0000250"/>
    <property type="project" value="UniProtKB"/>
</dbReference>
<dbReference type="GO" id="GO:0007416">
    <property type="term" value="P:synapse assembly"/>
    <property type="evidence" value="ECO:0000315"/>
    <property type="project" value="MGI"/>
</dbReference>
<dbReference type="GO" id="GO:0050808">
    <property type="term" value="P:synapse organization"/>
    <property type="evidence" value="ECO:0000315"/>
    <property type="project" value="MGI"/>
</dbReference>
<dbReference type="InterPro" id="IPR028816">
    <property type="entry name" value="Caprin"/>
</dbReference>
<dbReference type="InterPro" id="IPR022070">
    <property type="entry name" value="Caprin-1_C"/>
</dbReference>
<dbReference type="InterPro" id="IPR041637">
    <property type="entry name" value="Caprin-1_dimer"/>
</dbReference>
<dbReference type="PANTHER" id="PTHR22922:SF3">
    <property type="entry name" value="CAPRIN-1"/>
    <property type="match status" value="1"/>
</dbReference>
<dbReference type="PANTHER" id="PTHR22922">
    <property type="entry name" value="GPI-ANCHORED PROTEIN P137"/>
    <property type="match status" value="1"/>
</dbReference>
<dbReference type="Pfam" id="PF12287">
    <property type="entry name" value="Caprin-1_C"/>
    <property type="match status" value="1"/>
</dbReference>
<dbReference type="Pfam" id="PF18293">
    <property type="entry name" value="Caprin-1_dimer"/>
    <property type="match status" value="1"/>
</dbReference>
<protein>
    <recommendedName>
        <fullName evidence="8">Caprin-1</fullName>
    </recommendedName>
    <alternativeName>
        <fullName evidence="8">Cytoplasmic activation- and proliferation-associated protein 1</fullName>
    </alternativeName>
    <alternativeName>
        <fullName>GPI-anchored membrane protein 1</fullName>
    </alternativeName>
    <alternativeName>
        <fullName evidence="9">GPI-anchored protein p137</fullName>
        <shortName evidence="9">GPI-p137</shortName>
        <shortName>p137GPI</shortName>
    </alternativeName>
    <alternativeName>
        <fullName>Membrane component chromosome 11 surface marker 1</fullName>
    </alternativeName>
    <alternativeName>
        <fullName>RNA granule protein 105</fullName>
    </alternativeName>
</protein>
<sequence>MPSATSHSGSGSKSSGPPPPSGSSGSEAAAGAAAPASQHPATGTGAVQTEAMKQILGVIDKKLRNLEKKKGKLDDYQERMNKGERLNQDQLDAVSKYQEVTNNLEFAKELQRSFMALSQDIQKTIKKTARREQLMREEAEQKRLKTVLELQYVLDKLGDDDVRTDLKQGLSGVPILSEEELSLLDEFYKLVDPERDMSLRLNEQYEHASIHLWDLLEGKEKPVCGTTYKALKEIVERVFQSNYFDSTHNHQNGLCEEEEAASAPTVEDQVAEAEPEPAEEYTEQSEVESTEYVNRQFMAETQFSSGEKEQVDEWTVETVEVVNSLQQQPQAASPSVPEPHSLTPVAQSDPLVRRQRVQDLMAQMQGPYNFIQDSMLDFENQTLDPAIVSAQPMNPTQNMDMPQLVCPQVHSESRLAQSNQVPVQPEATQVPLVSSTSEGYTASQPLYQPSHATEQRPQKEPMDQIQATISLNTDQTTASSSLPAASQPQVFQAGTSKPLHSSGINVNAAPFQSMQTVFNMNAPVPPANEPETLKQQSQYQATYNQSFSSQPHQVEQTELQQDQLQTVVGTYHGSQDQPHQVPGNHQQPPQQNTGFPRSSQPYYNSRGVSRGGSRGARGLMNGYRGPANGFRGGYDGYRPSFSNTPNSGYSQSQFTAPRDYSGYQRDGYQQNFKRGSGQSGPRGAPRGRGGPPRPNRGMPQMNTQQVN</sequence>
<comment type="function">
    <text evidence="1 7">mRNA-binding protein that acts as a regulator of mRNAs transport, translation and/or stability, and which is involved in neurogenesis, synaptic plasticity in neurons and cell proliferation and migration in multiple cell types (PubMed:20516077). Plays an essential role in cytoplasmic stress granule formation (By similarity). Acts as an mRNA regulator by mediating formation of some phase-separated membraneless compartment: undergoes liquid-liquid phase separation upon binding to target mRNAs, leading to assemble mRNAs into cytoplasmic ribonucleoprotein granules that concentrate mRNAs with associated regulatory factors (By similarity). Undergoes liquid-liquid phase separation following phosphorylation and interaction with FMR1, promoting formation of cytoplasmic ribonucleoprotein granules that concentrate mRNAs with factors that inhibit translation and mediate deadenylation of target mRNAs (By similarity). In these cytoplasmic ribonucleoprotein granules, CAPRIN1 mediates recruitment of CNOT7 deadenylase, leading to mRNA deadenylation and degradation (By similarity). Binds directly and selectively to MYC and CCND2 mRNAs (By similarity). In neuronal cells, directly binds to several mRNAs associated with RNA granules, including BDNF, CAMK2A, CREB1, MAP2, NTRK2 mRNAs, as well as to GRIN1 and KPNB1 mRNAs, but not to rRNAs (By similarity).</text>
</comment>
<comment type="activity regulation">
    <text evidence="1">Ability to mediate liquid-liquid phase separation is regulated by ATP: moderate concentrations of ATP enhance phase separation, whereas high concentrations of ATP lead to inhibition of phase separation.</text>
</comment>
<comment type="subunit">
    <text evidence="1 5 6">May form homomultimers (PubMed:14764709). Interacts with G3BP1; interaction is direct and promotes stress granule formation (PubMed:17210633). Interacts with G3BP2; interaction is direct and promotes stress granule formation (By similarity). Interacts with PQBP1 (By similarity). Interacts with DDX3X (By similarity). Interacts (when phosphorylated by EPHA4) with FMR1; interaction with FMR1 promotes formation of a membraneless compartment (By similarity).</text>
</comment>
<comment type="subcellular location">
    <subcellularLocation>
        <location evidence="6">Cytoplasm</location>
        <location evidence="6">Cytoplasmic ribonucleoprotein granule</location>
    </subcellularLocation>
    <subcellularLocation>
        <location evidence="5 6">Cytoplasm</location>
        <location evidence="5 6">Cytosol</location>
    </subcellularLocation>
    <subcellularLocation>
        <location evidence="2">Cell projection</location>
        <location evidence="2">Dendrite</location>
    </subcellularLocation>
    <subcellularLocation>
        <location evidence="1">Cell projection</location>
        <location evidence="1">Lamellipodium</location>
    </subcellularLocation>
    <text evidence="1 6">Mediates formation and localizes to cytoplasmic ribonucleoprotein membraneless compartments (By similarity) (PubMed:17210633). Associated with RNA granules (PubMed:17210633). At the leading edge of migrating fibroblasts, colocalizes with DDX3X (By similarity).</text>
</comment>
<comment type="tissue specificity">
    <text evidence="5 7">Highest expression in thymus, spleen and brain (at protein level). Lower levels in kidney, muscle and liver (at protein level).</text>
</comment>
<comment type="developmental stage">
    <text evidence="5 7">Up-regulated when resting T- or B-lymphocytes or hemopoietic progenitors are activated. Down-regulated when a monocytic leukemia cell line, M1, is induced to differentiate. Expressed in brain at 17.5 dpc (at protein level).</text>
</comment>
<comment type="domain">
    <text evidence="1">The C-terminal disordered region undergoes liquid-liquid phase separation (LLPS) for the formation of a membraneless compartment that concentrates mRNAs with associated regulatory factors. CAPRIN1 molecules in the condensed phase are neutral. mRNA-binding promotes phase separation. Moderate concentrations of ATP enhance phase separation by reducing the electrostatic potential of CAPRIN1, thereby promoting intermolecular interactions. In contrast, high concentrations of ATP invert the electrostatic potential of CAPRIN1, so that CAPRIN1 molecules become negatively charged, lead to inhibition of phase separation.</text>
</comment>
<comment type="PTM">
    <text evidence="1">Tyrosine phosphorylation by EPHA4 promotes interaction with FMR1 and liquid-liquid phase separation (LLPS) for the formation of a membraneless compartment that concentrates mRNAs with associated regulatory factors.</text>
</comment>
<comment type="PTM">
    <text evidence="1">O-glycosylated (O-GlcNAcylated), in a cell cycle-dependent manner. O-glycosylation by OGT inhibit ability to undergo liquid-liquid phase separation (LLPS).</text>
</comment>
<comment type="similarity">
    <text evidence="11">Belongs to the caprin family.</text>
</comment>
<comment type="sequence caution" evidence="11">
    <conflict type="frameshift">
        <sequence resource="EMBL-CDS" id="AAA68561"/>
    </conflict>
</comment>
<comment type="sequence caution" evidence="11">
    <conflict type="erroneous initiation">
        <sequence resource="EMBL-CDS" id="AAA82599"/>
    </conflict>
    <text>Truncated N-terminus.</text>
</comment>
<comment type="sequence caution" evidence="11">
    <conflict type="erroneous gene model prediction">
        <sequence resource="EMBL-CDS" id="CAA61750"/>
    </conflict>
</comment>
<accession>Q60865</accession>
<accession>Q60758</accession>
<accession>Q61620</accession>
<accession>Q6IMN3</accession>
<accession>Q7TT26</accession>
<evidence type="ECO:0000250" key="1">
    <source>
        <dbReference type="UniProtKB" id="Q14444"/>
    </source>
</evidence>
<evidence type="ECO:0000250" key="2">
    <source>
        <dbReference type="UniProtKB" id="Q5M9G3"/>
    </source>
</evidence>
<evidence type="ECO:0000255" key="3"/>
<evidence type="ECO:0000256" key="4">
    <source>
        <dbReference type="SAM" id="MobiDB-lite"/>
    </source>
</evidence>
<evidence type="ECO:0000269" key="5">
    <source>
    </source>
</evidence>
<evidence type="ECO:0000269" key="6">
    <source>
    </source>
</evidence>
<evidence type="ECO:0000269" key="7">
    <source>
    </source>
</evidence>
<evidence type="ECO:0000303" key="8">
    <source>
    </source>
</evidence>
<evidence type="ECO:0000303" key="9">
    <source>
    </source>
</evidence>
<evidence type="ECO:0000303" key="10">
    <source ref="1"/>
</evidence>
<evidence type="ECO:0000305" key="11"/>
<evidence type="ECO:0007744" key="12">
    <source>
    </source>
</evidence>
<proteinExistence type="evidence at protein level"/>
<feature type="initiator methionine" description="Removed" evidence="1">
    <location>
        <position position="1"/>
    </location>
</feature>
<feature type="chain" id="PRO_0000087550" description="Caprin-1">
    <location>
        <begin position="2"/>
        <end position="707"/>
    </location>
</feature>
<feature type="region of interest" description="Disordered" evidence="4">
    <location>
        <begin position="1"/>
        <end position="48"/>
    </location>
</feature>
<feature type="region of interest" description="Disordered" evidence="4">
    <location>
        <begin position="325"/>
        <end position="347"/>
    </location>
</feature>
<feature type="region of interest" description="G3BP1-binding" evidence="1">
    <location>
        <begin position="358"/>
        <end position="379"/>
    </location>
</feature>
<feature type="region of interest" description="Disordered" evidence="4">
    <location>
        <begin position="412"/>
        <end position="496"/>
    </location>
</feature>
<feature type="region of interest" description="Disordered" evidence="4">
    <location>
        <begin position="526"/>
        <end position="558"/>
    </location>
</feature>
<feature type="region of interest" description="Disordered" evidence="4">
    <location>
        <begin position="570"/>
        <end position="707"/>
    </location>
</feature>
<feature type="coiled-coil region" evidence="3">
    <location>
        <begin position="58"/>
        <end position="92"/>
    </location>
</feature>
<feature type="coiled-coil region" evidence="3">
    <location>
        <begin position="123"/>
        <end position="151"/>
    </location>
</feature>
<feature type="compositionally biased region" description="Low complexity" evidence="4">
    <location>
        <begin position="1"/>
        <end position="15"/>
    </location>
</feature>
<feature type="compositionally biased region" description="Low complexity" evidence="4">
    <location>
        <begin position="22"/>
        <end position="43"/>
    </location>
</feature>
<feature type="compositionally biased region" description="Low complexity" evidence="4">
    <location>
        <begin position="325"/>
        <end position="335"/>
    </location>
</feature>
<feature type="compositionally biased region" description="Polar residues" evidence="4">
    <location>
        <begin position="431"/>
        <end position="452"/>
    </location>
</feature>
<feature type="compositionally biased region" description="Basic and acidic residues" evidence="4">
    <location>
        <begin position="453"/>
        <end position="462"/>
    </location>
</feature>
<feature type="compositionally biased region" description="Polar residues" evidence="4">
    <location>
        <begin position="465"/>
        <end position="474"/>
    </location>
</feature>
<feature type="compositionally biased region" description="Low complexity" evidence="4">
    <location>
        <begin position="475"/>
        <end position="489"/>
    </location>
</feature>
<feature type="compositionally biased region" description="Polar residues" evidence="4">
    <location>
        <begin position="533"/>
        <end position="552"/>
    </location>
</feature>
<feature type="compositionally biased region" description="Polar residues" evidence="4">
    <location>
        <begin position="572"/>
        <end position="603"/>
    </location>
</feature>
<feature type="compositionally biased region" description="Polar residues" evidence="4">
    <location>
        <begin position="640"/>
        <end position="655"/>
    </location>
</feature>
<feature type="compositionally biased region" description="Low complexity" evidence="4">
    <location>
        <begin position="674"/>
        <end position="684"/>
    </location>
</feature>
<feature type="compositionally biased region" description="Low complexity" evidence="4">
    <location>
        <begin position="695"/>
        <end position="707"/>
    </location>
</feature>
<feature type="modified residue" description="N-acetylproline" evidence="1">
    <location>
        <position position="2"/>
    </location>
</feature>
<feature type="modified residue" description="Phosphoserine" evidence="1">
    <location>
        <position position="10"/>
    </location>
</feature>
<feature type="modified residue" description="Phosphoserine" evidence="1">
    <location>
        <position position="113"/>
    </location>
</feature>
<feature type="modified residue" description="Omega-N-methylarginine" evidence="12">
    <location>
        <position position="163"/>
    </location>
</feature>
<feature type="modified residue" description="Phosphoserine" evidence="1">
    <location>
        <position position="333"/>
    </location>
</feature>
<feature type="modified residue" description="Phosphoserine" evidence="1">
    <location>
        <position position="341"/>
    </location>
</feature>
<feature type="modified residue" description="Phosphotyrosine" evidence="1">
    <location>
        <position position="623"/>
    </location>
</feature>
<feature type="modified residue" description="Omega-N-methylarginine" evidence="1">
    <location>
        <position position="624"/>
    </location>
</feature>
<feature type="modified residue" description="Omega-N-methylarginine" evidence="12">
    <location>
        <position position="631"/>
    </location>
</feature>
<feature type="modified residue" description="Phosphotyrosine" evidence="1">
    <location>
        <position position="634"/>
    </location>
</feature>
<feature type="modified residue" description="Phosphotyrosine" evidence="1">
    <location>
        <position position="637"/>
    </location>
</feature>
<feature type="modified residue" description="Omega-N-methylarginine" evidence="12">
    <location>
        <position position="638"/>
    </location>
</feature>
<feature type="modified residue" description="Phosphotyrosine" evidence="1">
    <location>
        <position position="649"/>
    </location>
</feature>
<feature type="modified residue" description="Phosphotyrosine" evidence="1">
    <location>
        <position position="660"/>
    </location>
</feature>
<feature type="modified residue" description="Phosphotyrosine" evidence="1">
    <location>
        <position position="663"/>
    </location>
</feature>
<feature type="modified residue" description="Phosphotyrosine" evidence="1">
    <location>
        <position position="668"/>
    </location>
</feature>
<feature type="modified residue" description="Asymmetric dimethylarginine; alternate" evidence="12">
    <location>
        <position position="696"/>
    </location>
</feature>
<feature type="modified residue" description="Omega-N-methylarginine; alternate" evidence="1">
    <location>
        <position position="696"/>
    </location>
</feature>
<feature type="glycosylation site" description="O-linked (GlcNAc) serine" evidence="1">
    <location>
        <position position="642"/>
    </location>
</feature>
<feature type="glycosylation site" description="O-linked (GlcNAc) serine" evidence="1">
    <location>
        <position position="647"/>
    </location>
</feature>
<feature type="sequence conflict" description="In Ref. 1; AAA82599." evidence="11" ref="1">
    <original>S</original>
    <variation>F</variation>
    <location>
        <position position="24"/>
    </location>
</feature>
<feature type="sequence conflict" description="In Ref. 1; AAA82599." evidence="11" ref="1">
    <original>G</original>
    <variation>D</variation>
    <location>
        <position position="45"/>
    </location>
</feature>
<feature type="sequence conflict" description="In Ref. 1; AAA82599." evidence="11" ref="1">
    <original>E</original>
    <variation>G</variation>
    <location>
        <position position="105"/>
    </location>
</feature>
<feature type="sequence conflict" description="In Ref. 1; AAA82599." evidence="11" ref="1">
    <original>V</original>
    <variation>A</variation>
    <location>
        <position position="266"/>
    </location>
</feature>
<feature type="sequence conflict" description="In Ref. 1; AAA82599." evidence="11" ref="1">
    <original>E</original>
    <variation>K</variation>
    <location>
        <position position="338"/>
    </location>
</feature>
<feature type="sequence conflict" description="In Ref. 6; AAA68561." evidence="11" ref="6">
    <original>PQL</original>
    <variation>ESV</variation>
    <location>
        <begin position="402"/>
        <end position="404"/>
    </location>
</feature>
<feature type="sequence conflict" description="In Ref. 1; AAA82599." evidence="11" ref="1">
    <original>QL</original>
    <variation>HV</variation>
    <location>
        <begin position="403"/>
        <end position="404"/>
    </location>
</feature>
<feature type="sequence conflict" description="In Ref. 4; AAH52427." evidence="11" ref="4">
    <location>
        <position position="603"/>
    </location>
</feature>
<organism>
    <name type="scientific">Mus musculus</name>
    <name type="common">Mouse</name>
    <dbReference type="NCBI Taxonomy" id="10090"/>
    <lineage>
        <taxon>Eukaryota</taxon>
        <taxon>Metazoa</taxon>
        <taxon>Chordata</taxon>
        <taxon>Craniata</taxon>
        <taxon>Vertebrata</taxon>
        <taxon>Euteleostomi</taxon>
        <taxon>Mammalia</taxon>
        <taxon>Eutheria</taxon>
        <taxon>Euarchontoglires</taxon>
        <taxon>Glires</taxon>
        <taxon>Rodentia</taxon>
        <taxon>Myomorpha</taxon>
        <taxon>Muroidea</taxon>
        <taxon>Muridae</taxon>
        <taxon>Murinae</taxon>
        <taxon>Mus</taxon>
        <taxon>Mus</taxon>
    </lineage>
</organism>